<organism>
    <name type="scientific">Bos taurus</name>
    <name type="common">Bovine</name>
    <dbReference type="NCBI Taxonomy" id="9913"/>
    <lineage>
        <taxon>Eukaryota</taxon>
        <taxon>Metazoa</taxon>
        <taxon>Chordata</taxon>
        <taxon>Craniata</taxon>
        <taxon>Vertebrata</taxon>
        <taxon>Euteleostomi</taxon>
        <taxon>Mammalia</taxon>
        <taxon>Eutheria</taxon>
        <taxon>Laurasiatheria</taxon>
        <taxon>Artiodactyla</taxon>
        <taxon>Ruminantia</taxon>
        <taxon>Pecora</taxon>
        <taxon>Bovidae</taxon>
        <taxon>Bovinae</taxon>
        <taxon>Bos</taxon>
    </lineage>
</organism>
<protein>
    <recommendedName>
        <fullName>Piercer of microtubule wall 1 protein</fullName>
        <shortName>Pierce1</shortName>
    </recommendedName>
    <alternativeName>
        <fullName>UPF0691 protein C9orf116 homolog</fullName>
    </alternativeName>
</protein>
<evidence type="ECO:0000256" key="1">
    <source>
        <dbReference type="SAM" id="MobiDB-lite"/>
    </source>
</evidence>
<evidence type="ECO:0000269" key="2">
    <source>
    </source>
</evidence>
<evidence type="ECO:0000269" key="3">
    <source>
    </source>
</evidence>
<evidence type="ECO:0000305" key="4"/>
<evidence type="ECO:0000305" key="5">
    <source>
    </source>
</evidence>
<evidence type="ECO:0007744" key="6">
    <source>
        <dbReference type="PDB" id="7RRO"/>
    </source>
</evidence>
<evidence type="ECO:0007744" key="7">
    <source>
        <dbReference type="PDB" id="8OTZ"/>
    </source>
</evidence>
<keyword id="KW-0002">3D-structure</keyword>
<keyword id="KW-0966">Cell projection</keyword>
<keyword id="KW-0969">Cilium</keyword>
<keyword id="KW-0963">Cytoplasm</keyword>
<keyword id="KW-0206">Cytoskeleton</keyword>
<keyword id="KW-0282">Flagellum</keyword>
<keyword id="KW-1185">Reference proteome</keyword>
<gene>
    <name type="primary">PIERCE1</name>
</gene>
<reference key="1">
    <citation type="submission" date="2005-10" db="EMBL/GenBank/DDBJ databases">
        <authorList>
            <consortium name="NIH - Mammalian Gene Collection (MGC) project"/>
        </authorList>
    </citation>
    <scope>NUCLEOTIDE SEQUENCE [LARGE SCALE MRNA]</scope>
    <source>
        <strain>Crossbred X Angus</strain>
        <tissue>Liver</tissue>
    </source>
</reference>
<reference evidence="6" key="2">
    <citation type="journal article" date="2021" name="Cell">
        <title>De novo identification of mammalian ciliary motility proteins using cryo-EM.</title>
        <authorList>
            <person name="Gui M."/>
            <person name="Farley H."/>
            <person name="Anujan P."/>
            <person name="Anderson J.R."/>
            <person name="Maxwell D.W."/>
            <person name="Whitchurch J.B."/>
            <person name="Botsch J.J."/>
            <person name="Qiu T."/>
            <person name="Meleppattu S."/>
            <person name="Singh S.K."/>
            <person name="Zhang Q."/>
            <person name="Thompson J."/>
            <person name="Lucas J.S."/>
            <person name="Bingle C.D."/>
            <person name="Norris D.P."/>
            <person name="Roy S."/>
            <person name="Brown A."/>
        </authorList>
    </citation>
    <scope>STRUCTURE BY ELECTRON MICROSCOPY (3.40 ANGSTROMS)</scope>
    <scope>SUBCELLULAR LOCATION</scope>
    <scope>TISSUE SPECIFICITY</scope>
    <scope>INTERACTION WITH CFAP53; ODAD1 AND ODAD3</scope>
    <scope>FUNCTION</scope>
</reference>
<reference evidence="7" key="3">
    <citation type="journal article" date="2023" name="Cell">
        <title>Structural specializations of the sperm tail.</title>
        <authorList>
            <person name="Leung M.R."/>
            <person name="Zeng J."/>
            <person name="Wang X."/>
            <person name="Roelofs M.C."/>
            <person name="Huang W."/>
            <person name="Zenezini Chiozzi R."/>
            <person name="Hevler J.F."/>
            <person name="Heck A.J.R."/>
            <person name="Dutcher S.K."/>
            <person name="Brown A."/>
            <person name="Zhang R."/>
            <person name="Zeev-Ben-Mordehai T."/>
        </authorList>
    </citation>
    <scope>STRUCTURE BY ELECTRON MICROSCOPY (3.60 ANGSTROMS)</scope>
    <scope>SUBUNIT</scope>
    <scope>SUBCELLULAR LOCATION</scope>
</reference>
<name>PIRC1_BOVIN</name>
<proteinExistence type="evidence at protein level"/>
<sequence length="136" mass="15654">MSEEDPKACAEPEEPKAGPPPEKTSDWYRVSEDLPARFNNPAWFRGYRTKEPPSVYRTSNQAYGSRAPTVHEMPKVFYPNSYKFSRQVAVGGMFQNNTLNVYMEKSIVTGPDNYITSYDRLNFHPSYRVCRPSICD</sequence>
<feature type="chain" id="PRO_0000359779" description="Piercer of microtubule wall 1 protein">
    <location>
        <begin position="1"/>
        <end position="136"/>
    </location>
</feature>
<feature type="region of interest" description="Disordered" evidence="1">
    <location>
        <begin position="1"/>
        <end position="27"/>
    </location>
</feature>
<feature type="compositionally biased region" description="Basic and acidic residues" evidence="1">
    <location>
        <begin position="1"/>
        <end position="16"/>
    </location>
</feature>
<comment type="function">
    <text evidence="5">Microtubule inner protein involved in the attachment of outer dynein arms (ODAs) to dynein-decorated doublet microtubules (DMTs) in cilia axoneme, which is required for motile cilia beating. Functions at the initial step of left-right asymmetry specification of the visceral organs.</text>
</comment>
<comment type="subunit">
    <text evidence="2 3">Microtubule inner protein component of sperm flagellar doublet microtubules (PubMed:37327785). Interacts with CFAP53, ODAD1 and ODAD3; the interactions link the outer dynein arms docking complex (ODA-DC) to the internal microtubule inner proteins (MIP) in cilium axoneme (PubMed:34715025).</text>
</comment>
<comment type="subcellular location">
    <subcellularLocation>
        <location evidence="2">Cytoplasm</location>
        <location evidence="2">Cytoskeleton</location>
        <location evidence="2">Cilium axoneme</location>
    </subcellularLocation>
    <subcellularLocation>
        <location evidence="3">Cytoplasm</location>
        <location evidence="3">Cytoskeleton</location>
        <location evidence="3">Flagellum axoneme</location>
    </subcellularLocation>
</comment>
<comment type="tissue specificity">
    <text evidence="2">Expressed in trachea multiciliated cells.</text>
</comment>
<comment type="similarity">
    <text evidence="4">Belongs to the PIERCE1 family.</text>
</comment>
<accession>Q32P67</accession>
<dbReference type="EMBL" id="BC108239">
    <property type="protein sequence ID" value="AAI08240.1"/>
    <property type="molecule type" value="mRNA"/>
</dbReference>
<dbReference type="RefSeq" id="NP_001032568.1">
    <property type="nucleotide sequence ID" value="NM_001037491.2"/>
</dbReference>
<dbReference type="PDB" id="7RRO">
    <property type="method" value="EM"/>
    <property type="resolution" value="3.40 A"/>
    <property type="chains" value="y/z=1-136"/>
</dbReference>
<dbReference type="PDB" id="8OTZ">
    <property type="method" value="EM"/>
    <property type="resolution" value="3.60 A"/>
    <property type="chains" value="Bf/Bg=1-136"/>
</dbReference>
<dbReference type="PDB" id="9CPB">
    <property type="method" value="EM"/>
    <property type="resolution" value="3.52 A"/>
    <property type="chains" value="4V/4W=1-136"/>
</dbReference>
<dbReference type="PDBsum" id="7RRO"/>
<dbReference type="PDBsum" id="8OTZ"/>
<dbReference type="PDBsum" id="9CPB"/>
<dbReference type="EMDB" id="EMD-17187"/>
<dbReference type="EMDB" id="EMD-24664"/>
<dbReference type="EMDB" id="EMD-45801"/>
<dbReference type="EMDB" id="EMD-50664"/>
<dbReference type="FunCoup" id="Q32P67">
    <property type="interactions" value="65"/>
</dbReference>
<dbReference type="STRING" id="9913.ENSBTAP00000065041"/>
<dbReference type="PaxDb" id="9913-ENSBTAP00000032531"/>
<dbReference type="Ensembl" id="ENSBTAT00000093515.1">
    <property type="protein sequence ID" value="ENSBTAP00000086178.1"/>
    <property type="gene ID" value="ENSBTAG00000068526.1"/>
</dbReference>
<dbReference type="GeneID" id="618654"/>
<dbReference type="KEGG" id="bta:618654"/>
<dbReference type="CTD" id="138162"/>
<dbReference type="VEuPathDB" id="HostDB:ENSBTAG00000049410"/>
<dbReference type="eggNOG" id="ENOG502S22V">
    <property type="taxonomic scope" value="Eukaryota"/>
</dbReference>
<dbReference type="GeneTree" id="ENSGT00940000154745"/>
<dbReference type="HOGENOM" id="CLU_135708_0_0_1"/>
<dbReference type="InParanoid" id="Q32P67"/>
<dbReference type="OMA" id="MFRNNTF"/>
<dbReference type="OrthoDB" id="546383at2759"/>
<dbReference type="TreeFam" id="TF323876"/>
<dbReference type="Proteomes" id="UP000009136">
    <property type="component" value="Chromosome 11"/>
</dbReference>
<dbReference type="Bgee" id="ENSBTAG00000049410">
    <property type="expression patterns" value="Expressed in oviduct epithelium and 107 other cell types or tissues"/>
</dbReference>
<dbReference type="GO" id="GO:0160111">
    <property type="term" value="C:axonemal A tubule inner sheath"/>
    <property type="evidence" value="ECO:0000250"/>
    <property type="project" value="UniProtKB"/>
</dbReference>
<dbReference type="GO" id="GO:0005879">
    <property type="term" value="C:axonemal microtubule"/>
    <property type="evidence" value="ECO:0000314"/>
    <property type="project" value="UniProtKB"/>
</dbReference>
<dbReference type="GO" id="GO:0005737">
    <property type="term" value="C:cytoplasm"/>
    <property type="evidence" value="ECO:0000250"/>
    <property type="project" value="UniProtKB"/>
</dbReference>
<dbReference type="GO" id="GO:0005634">
    <property type="term" value="C:nucleus"/>
    <property type="evidence" value="ECO:0000250"/>
    <property type="project" value="UniProtKB"/>
</dbReference>
<dbReference type="GO" id="GO:0036126">
    <property type="term" value="C:sperm flagellum"/>
    <property type="evidence" value="ECO:0000250"/>
    <property type="project" value="UniProtKB"/>
</dbReference>
<dbReference type="GO" id="GO:0035082">
    <property type="term" value="P:axoneme assembly"/>
    <property type="evidence" value="ECO:0000250"/>
    <property type="project" value="UniProtKB"/>
</dbReference>
<dbReference type="GO" id="GO:0071494">
    <property type="term" value="P:cellular response to UV-C"/>
    <property type="evidence" value="ECO:0007669"/>
    <property type="project" value="Ensembl"/>
</dbReference>
<dbReference type="GO" id="GO:0003341">
    <property type="term" value="P:cilium movement"/>
    <property type="evidence" value="ECO:0000250"/>
    <property type="project" value="UniProtKB"/>
</dbReference>
<dbReference type="GO" id="GO:0007368">
    <property type="term" value="P:determination of left/right symmetry"/>
    <property type="evidence" value="ECO:0000250"/>
    <property type="project" value="UniProtKB"/>
</dbReference>
<dbReference type="GO" id="GO:0006974">
    <property type="term" value="P:DNA damage response"/>
    <property type="evidence" value="ECO:0007669"/>
    <property type="project" value="Ensembl"/>
</dbReference>
<dbReference type="GO" id="GO:0061966">
    <property type="term" value="P:establishment of left/right asymmetry"/>
    <property type="evidence" value="ECO:0000250"/>
    <property type="project" value="UniProtKB"/>
</dbReference>
<dbReference type="GO" id="GO:0030317">
    <property type="term" value="P:flagellated sperm motility"/>
    <property type="evidence" value="ECO:0000250"/>
    <property type="project" value="UniProtKB"/>
</dbReference>
<dbReference type="GO" id="GO:0010468">
    <property type="term" value="P:regulation of gene expression"/>
    <property type="evidence" value="ECO:0007669"/>
    <property type="project" value="Ensembl"/>
</dbReference>
<dbReference type="InterPro" id="IPR026507">
    <property type="entry name" value="PIRC1/2"/>
</dbReference>
<dbReference type="PANTHER" id="PTHR20899">
    <property type="entry name" value="PIERCE HOMOLOG"/>
    <property type="match status" value="1"/>
</dbReference>
<dbReference type="PANTHER" id="PTHR20899:SF1">
    <property type="entry name" value="PIERCER OF MICROTUBULE WALL 1 PROTEIN"/>
    <property type="match status" value="1"/>
</dbReference>
<dbReference type="Pfam" id="PF14892">
    <property type="entry name" value="PIRC1_2"/>
    <property type="match status" value="1"/>
</dbReference>